<protein>
    <recommendedName>
        <fullName>Egg-laying-like hormone</fullName>
    </recommendedName>
    <alternativeName>
        <fullName>L-ELH</fullName>
    </alternativeName>
</protein>
<dbReference type="GO" id="GO:0005179">
    <property type="term" value="F:hormone activity"/>
    <property type="evidence" value="ECO:0007669"/>
    <property type="project" value="UniProtKB-KW"/>
</dbReference>
<dbReference type="GO" id="GO:0007218">
    <property type="term" value="P:neuropeptide signaling pathway"/>
    <property type="evidence" value="ECO:0007669"/>
    <property type="project" value="UniProtKB-KW"/>
</dbReference>
<organism>
    <name type="scientific">Theromyzon tessulatum</name>
    <name type="common">Duck leech</name>
    <dbReference type="NCBI Taxonomy" id="13286"/>
    <lineage>
        <taxon>Eukaryota</taxon>
        <taxon>Metazoa</taxon>
        <taxon>Spiralia</taxon>
        <taxon>Lophotrochozoa</taxon>
        <taxon>Annelida</taxon>
        <taxon>Clitellata</taxon>
        <taxon>Hirudinea</taxon>
        <taxon>Rhynchobdellida</taxon>
        <taxon>Glossiphoniidae</taxon>
        <taxon>Theromyzon</taxon>
    </lineage>
</organism>
<comment type="function">
    <text>May be involved in leech reproduction.</text>
</comment>
<comment type="tissue specificity">
    <text>Supra, subesophageal ganglia and segmental ganglia of the ventral nerve cord and brain.</text>
</comment>
<comment type="developmental stage">
    <text>L-ELH greatly increases before egg-laying, while it strongly decreases after egg-laying.</text>
</comment>
<comment type="mass spectrometry"/>
<sequence>GSGVSNGGTEMIQLSHIRERQRYWAQDNLRRRFLEK</sequence>
<reference key="1">
    <citation type="journal article" date="1997" name="Brain Res. Mol. Brain Res.">
        <title>Leech egg-laying-like hormone: structure, neuronal distribution and phylogeny.</title>
        <authorList>
            <person name="Salzet M."/>
            <person name="Verger-Bocquet M."/>
            <person name="Vandenbulcke F."/>
            <person name="van Minnen J."/>
        </authorList>
    </citation>
    <scope>PROTEIN SEQUENCE</scope>
    <scope>AMIDATION AT LYS-36</scope>
    <scope>MASS SPECTROMETRY</scope>
    <source>
        <tissue>CNS</tissue>
    </source>
</reference>
<keyword id="KW-0027">Amidation</keyword>
<keyword id="KW-0903">Direct protein sequencing</keyword>
<keyword id="KW-0372">Hormone</keyword>
<keyword id="KW-0527">Neuropeptide</keyword>
<accession>P80594</accession>
<evidence type="ECO:0000269" key="1">
    <source>
    </source>
</evidence>
<name>ELH_THETS</name>
<feature type="peptide" id="PRO_0000044774" description="Egg-laying-like hormone">
    <location>
        <begin position="1"/>
        <end position="36"/>
    </location>
</feature>
<feature type="modified residue" description="Lysine amide" evidence="1">
    <location>
        <position position="36"/>
    </location>
</feature>
<proteinExistence type="evidence at protein level"/>